<keyword id="KW-0029">Amino-acid transport</keyword>
<keyword id="KW-0997">Cell inner membrane</keyword>
<keyword id="KW-1003">Cell membrane</keyword>
<keyword id="KW-0472">Membrane</keyword>
<keyword id="KW-1185">Reference proteome</keyword>
<keyword id="KW-0769">Symport</keyword>
<keyword id="KW-0812">Transmembrane</keyword>
<keyword id="KW-1133">Transmembrane helix</keyword>
<keyword id="KW-0813">Transport</keyword>
<comment type="function">
    <text evidence="1">Involved in the import of threonine and serine into the cell, with the concomitant import of a proton (symport system).</text>
</comment>
<comment type="catalytic activity">
    <reaction evidence="1">
        <text>L-threonine(in) + H(+)(in) = L-threonine(out) + H(+)(out)</text>
        <dbReference type="Rhea" id="RHEA:28883"/>
        <dbReference type="ChEBI" id="CHEBI:15378"/>
        <dbReference type="ChEBI" id="CHEBI:57926"/>
    </reaction>
    <physiologicalReaction direction="right-to-left" evidence="1">
        <dbReference type="Rhea" id="RHEA:28885"/>
    </physiologicalReaction>
</comment>
<comment type="catalytic activity">
    <reaction evidence="1">
        <text>L-serine(in) + H(+)(in) = L-serine(out) + H(+)(out)</text>
        <dbReference type="Rhea" id="RHEA:28887"/>
        <dbReference type="ChEBI" id="CHEBI:15378"/>
        <dbReference type="ChEBI" id="CHEBI:33384"/>
    </reaction>
    <physiologicalReaction direction="right-to-left" evidence="1">
        <dbReference type="Rhea" id="RHEA:28889"/>
    </physiologicalReaction>
</comment>
<comment type="subcellular location">
    <subcellularLocation>
        <location evidence="1">Cell inner membrane</location>
        <topology evidence="1">Multi-pass membrane protein</topology>
    </subcellularLocation>
</comment>
<comment type="similarity">
    <text evidence="1">Belongs to the amino acid/polyamine transporter 2 family. SdaC/TdcC subfamily.</text>
</comment>
<gene>
    <name evidence="1" type="primary">tdcC</name>
    <name type="ordered locus">E2348C_3406</name>
</gene>
<sequence length="443" mass="48893">MSTSDSIVSSQTKQSSWRKSDTTWTLGLFGTAIGAGVLFFPIRAGFGGLIPILLMLVLAYPIAFYCHRALARLCLSGSNPSGNITETVEEHFGKTGGVVITFLYFFAICPLLWIYGVTITNTFMTFWENQLGFAPLNRGFVALFLLLLMAFVIWFGKDLMVKVMSYLVWPFIASLVLISLSLIPYWNSAVIDQVDLGSLSLTGHDGILITVWLGISIMVFSFNFSPIVSSFVVSKREEYEKDFGRDFTERKCSQIISRASMLMVAVVMFFAFSCLFTLSPANMAEAKAQNIPVLSYLANHFASMTGTKTTFAITLEYAASIIALVAIFKSFFGHYLGTLEGLNGLILKFGYKGDKTKVSLGKLNTISMIFIMGSTWVVAYANPNILDLIEAMGAPIIASLLCLLPMYAIRKAPSLAKYRGRLDNVFVTVIGLLTILNIVYKLF</sequence>
<organism>
    <name type="scientific">Escherichia coli O127:H6 (strain E2348/69 / EPEC)</name>
    <dbReference type="NCBI Taxonomy" id="574521"/>
    <lineage>
        <taxon>Bacteria</taxon>
        <taxon>Pseudomonadati</taxon>
        <taxon>Pseudomonadota</taxon>
        <taxon>Gammaproteobacteria</taxon>
        <taxon>Enterobacterales</taxon>
        <taxon>Enterobacteriaceae</taxon>
        <taxon>Escherichia</taxon>
    </lineage>
</organism>
<reference key="1">
    <citation type="journal article" date="2009" name="J. Bacteriol.">
        <title>Complete genome sequence and comparative genome analysis of enteropathogenic Escherichia coli O127:H6 strain E2348/69.</title>
        <authorList>
            <person name="Iguchi A."/>
            <person name="Thomson N.R."/>
            <person name="Ogura Y."/>
            <person name="Saunders D."/>
            <person name="Ooka T."/>
            <person name="Henderson I.R."/>
            <person name="Harris D."/>
            <person name="Asadulghani M."/>
            <person name="Kurokawa K."/>
            <person name="Dean P."/>
            <person name="Kenny B."/>
            <person name="Quail M.A."/>
            <person name="Thurston S."/>
            <person name="Dougan G."/>
            <person name="Hayashi T."/>
            <person name="Parkhill J."/>
            <person name="Frankel G."/>
        </authorList>
    </citation>
    <scope>NUCLEOTIDE SEQUENCE [LARGE SCALE GENOMIC DNA]</scope>
    <source>
        <strain>E2348/69 / EPEC</strain>
    </source>
</reference>
<proteinExistence type="inferred from homology"/>
<name>TDCC_ECO27</name>
<accession>B7UJ20</accession>
<evidence type="ECO:0000255" key="1">
    <source>
        <dbReference type="HAMAP-Rule" id="MF_01583"/>
    </source>
</evidence>
<dbReference type="EMBL" id="FM180568">
    <property type="protein sequence ID" value="CAS10954.1"/>
    <property type="molecule type" value="Genomic_DNA"/>
</dbReference>
<dbReference type="RefSeq" id="WP_000107720.1">
    <property type="nucleotide sequence ID" value="NC_011601.1"/>
</dbReference>
<dbReference type="SMR" id="B7UJ20"/>
<dbReference type="GeneID" id="75205075"/>
<dbReference type="KEGG" id="ecg:E2348C_3406"/>
<dbReference type="HOGENOM" id="CLU_052043_1_1_6"/>
<dbReference type="Proteomes" id="UP000008205">
    <property type="component" value="Chromosome"/>
</dbReference>
<dbReference type="GO" id="GO:0005886">
    <property type="term" value="C:plasma membrane"/>
    <property type="evidence" value="ECO:0007669"/>
    <property type="project" value="UniProtKB-SubCell"/>
</dbReference>
<dbReference type="GO" id="GO:0015194">
    <property type="term" value="F:L-serine transmembrane transporter activity"/>
    <property type="evidence" value="ECO:0007669"/>
    <property type="project" value="InterPro"/>
</dbReference>
<dbReference type="GO" id="GO:0015293">
    <property type="term" value="F:symporter activity"/>
    <property type="evidence" value="ECO:0007669"/>
    <property type="project" value="UniProtKB-UniRule"/>
</dbReference>
<dbReference type="GO" id="GO:0015565">
    <property type="term" value="F:threonine efflux transmembrane transporter activity"/>
    <property type="evidence" value="ECO:0007669"/>
    <property type="project" value="InterPro"/>
</dbReference>
<dbReference type="HAMAP" id="MF_01583">
    <property type="entry name" value="Thr_Ser_transp_TdcC"/>
    <property type="match status" value="1"/>
</dbReference>
<dbReference type="InterPro" id="IPR018227">
    <property type="entry name" value="Amino_acid_transport_2"/>
</dbReference>
<dbReference type="InterPro" id="IPR004694">
    <property type="entry name" value="Hydroxy_aa_transpt"/>
</dbReference>
<dbReference type="InterPro" id="IPR023726">
    <property type="entry name" value="Thr/Ser_transpt_TdcC"/>
</dbReference>
<dbReference type="NCBIfam" id="NF010152">
    <property type="entry name" value="PRK13629.1"/>
    <property type="match status" value="1"/>
</dbReference>
<dbReference type="NCBIfam" id="TIGR00814">
    <property type="entry name" value="stp"/>
    <property type="match status" value="1"/>
</dbReference>
<dbReference type="PANTHER" id="PTHR35334">
    <property type="entry name" value="SERINE TRANSPORTER"/>
    <property type="match status" value="1"/>
</dbReference>
<dbReference type="PANTHER" id="PTHR35334:SF1">
    <property type="entry name" value="THREONINE_SERINE TRANSPORTER TDCC"/>
    <property type="match status" value="1"/>
</dbReference>
<dbReference type="Pfam" id="PF03222">
    <property type="entry name" value="Trp_Tyr_perm"/>
    <property type="match status" value="1"/>
</dbReference>
<protein>
    <recommendedName>
        <fullName evidence="1">Threonine/serine transporter TdcC</fullName>
    </recommendedName>
    <alternativeName>
        <fullName evidence="1">H(+)/threonine-serine symporter</fullName>
    </alternativeName>
</protein>
<feature type="chain" id="PRO_1000185657" description="Threonine/serine transporter TdcC">
    <location>
        <begin position="1"/>
        <end position="443"/>
    </location>
</feature>
<feature type="transmembrane region" description="Helical" evidence="1">
    <location>
        <begin position="22"/>
        <end position="42"/>
    </location>
</feature>
<feature type="transmembrane region" description="Helical" evidence="1">
    <location>
        <begin position="44"/>
        <end position="64"/>
    </location>
</feature>
<feature type="transmembrane region" description="Helical" evidence="1">
    <location>
        <begin position="97"/>
        <end position="117"/>
    </location>
</feature>
<feature type="transmembrane region" description="Helical" evidence="1">
    <location>
        <begin position="140"/>
        <end position="160"/>
    </location>
</feature>
<feature type="transmembrane region" description="Helical" evidence="1">
    <location>
        <begin position="163"/>
        <end position="183"/>
    </location>
</feature>
<feature type="transmembrane region" description="Helical" evidence="1">
    <location>
        <begin position="207"/>
        <end position="227"/>
    </location>
</feature>
<feature type="transmembrane region" description="Helical" evidence="1">
    <location>
        <begin position="261"/>
        <end position="281"/>
    </location>
</feature>
<feature type="transmembrane region" description="Helical" evidence="1">
    <location>
        <begin position="311"/>
        <end position="331"/>
    </location>
</feature>
<feature type="transmembrane region" description="Helical" evidence="1">
    <location>
        <begin position="366"/>
        <end position="386"/>
    </location>
</feature>
<feature type="transmembrane region" description="Helical" evidence="1">
    <location>
        <begin position="389"/>
        <end position="409"/>
    </location>
</feature>
<feature type="transmembrane region" description="Helical" evidence="1">
    <location>
        <begin position="423"/>
        <end position="443"/>
    </location>
</feature>